<sequence length="741" mass="82116">MTLQEIKDQVLAGFDISSAQATWLANMADSEALYAAAHEITITCASHEFDMCSIINAKSGRCPENCKWCAQSSHYKTQAEIYDLLPAEECLRQAKYNESQDVNRFSLVTSGRKPSPKQISQLCDAARLMRKHSSIQLCASLGLLNEEELRALHTAGITRYHCNLETAPSYFPTLCSTHTQEQKLATLDAARRVGMDICCGGIIGMGETMEQRIEFAFTLAELNVQSIPINLLSPIPGTPLENEKALSEEEILRTIALFRFINPTAFLRFAGGRSQLTPEAMRKALFVGINSAIVGDLLTTLGSKVSDDKKMILEEGYHFADSQFDREHLWHPYTSTTDPLPVYKVKRADGATITLEDGRTLIEGMSSWWCAVHGYNHPVLNQAAKDQLDKMSHVMFGGLTHDPAIELGKLLLPLVPPSMQKIFYADSGSVAVEVALKMAVQYWYAAGKPDKNNFVTIRSGYHGDTWNAMSVCDPVTGMHSLFGSSLPVRYFVPAPSSRFDGEWNPDEIIPLRETIEKHSKELAALILEPIVQGAGGMWFYHPQYLREAEKLCKEHDILLIFDEIATGFGRTGKLFAWEHAGVEPDIMCIGKALTGGYMTLSAVLASNQIADTISNHAPKAFMHGPTFMGNPLACAVACASVRLLLDSGWAENVKRIEAQLKEELAPARKFPQVADVRILGAIGVIQTERSVSMAYMQRRFVEEGIWVRPFGKLVYLMPPFIISPEQLSKLTSGVLKIVREM</sequence>
<protein>
    <recommendedName>
        <fullName>Biotin biosynthesis bifunctional protein BioAB</fullName>
    </recommendedName>
    <domain>
        <recommendedName>
            <fullName>Biotin synthase BioB</fullName>
            <ecNumber>2.8.1.6</ecNumber>
        </recommendedName>
    </domain>
    <domain>
        <recommendedName>
            <fullName>Adenosylmethionine-8-amino-7-oxononanoate aminotransferase BioA</fullName>
            <ecNumber>2.6.1.62</ecNumber>
        </recommendedName>
        <alternativeName>
            <fullName>7,8-diamino-pelargonic acid aminotransferase</fullName>
            <shortName>DAPA AT</shortName>
            <shortName>DAPA aminotransferase</shortName>
        </alternativeName>
        <alternativeName>
            <fullName>7,8-diaminononanoate synthase</fullName>
            <shortName>DANS</shortName>
        </alternativeName>
        <alternativeName>
            <fullName>Diaminopelargonic acid synthase</fullName>
        </alternativeName>
    </domain>
</protein>
<keyword id="KW-0001">2Fe-2S</keyword>
<keyword id="KW-0004">4Fe-4S</keyword>
<keyword id="KW-0032">Aminotransferase</keyword>
<keyword id="KW-0093">Biotin biosynthesis</keyword>
<keyword id="KW-0408">Iron</keyword>
<keyword id="KW-0411">Iron-sulfur</keyword>
<keyword id="KW-0479">Metal-binding</keyword>
<keyword id="KW-0511">Multifunctional enzyme</keyword>
<keyword id="KW-0663">Pyridoxal phosphate</keyword>
<keyword id="KW-1185">Reference proteome</keyword>
<keyword id="KW-0949">S-adenosyl-L-methionine</keyword>
<keyword id="KW-0808">Transferase</keyword>
<organism>
    <name type="scientific">Bacteroides thetaiotaomicron (strain ATCC 29148 / DSM 2079 / JCM 5827 / CCUG 10774 / NCTC 10582 / VPI-5482 / E50)</name>
    <dbReference type="NCBI Taxonomy" id="226186"/>
    <lineage>
        <taxon>Bacteria</taxon>
        <taxon>Pseudomonadati</taxon>
        <taxon>Bacteroidota</taxon>
        <taxon>Bacteroidia</taxon>
        <taxon>Bacteroidales</taxon>
        <taxon>Bacteroidaceae</taxon>
        <taxon>Bacteroides</taxon>
    </lineage>
</organism>
<reference key="1">
    <citation type="journal article" date="2003" name="Science">
        <title>A genomic view of the human-Bacteroides thetaiotaomicron symbiosis.</title>
        <authorList>
            <person name="Xu J."/>
            <person name="Bjursell M.K."/>
            <person name="Himrod J."/>
            <person name="Deng S."/>
            <person name="Carmichael L.K."/>
            <person name="Chiang H.C."/>
            <person name="Hooper L.V."/>
            <person name="Gordon J.I."/>
        </authorList>
    </citation>
    <scope>NUCLEOTIDE SEQUENCE [LARGE SCALE GENOMIC DNA]</scope>
    <source>
        <strain>ATCC 29148 / DSM 2079 / JCM 5827 / CCUG 10774 / NCTC 10582 / VPI-5482 / E50</strain>
    </source>
</reference>
<name>BIOAB_BACTN</name>
<feature type="chain" id="PRO_0000381234" description="Biotin biosynthesis bifunctional protein BioAB">
    <location>
        <begin position="1"/>
        <end position="741"/>
    </location>
</feature>
<feature type="domain" description="Radical SAM core" evidence="2">
    <location>
        <begin position="44"/>
        <end position="273"/>
    </location>
</feature>
<feature type="binding site" evidence="1">
    <location>
        <position position="62"/>
    </location>
    <ligand>
        <name>[4Fe-4S] cluster</name>
        <dbReference type="ChEBI" id="CHEBI:49883"/>
        <note>4Fe-4S-S-AdoMet</note>
    </ligand>
</feature>
<feature type="binding site" evidence="1">
    <location>
        <position position="66"/>
    </location>
    <ligand>
        <name>[4Fe-4S] cluster</name>
        <dbReference type="ChEBI" id="CHEBI:49883"/>
        <note>4Fe-4S-S-AdoMet</note>
    </ligand>
</feature>
<feature type="binding site" evidence="1">
    <location>
        <position position="69"/>
    </location>
    <ligand>
        <name>[4Fe-4S] cluster</name>
        <dbReference type="ChEBI" id="CHEBI:49883"/>
        <note>4Fe-4S-S-AdoMet</note>
    </ligand>
</feature>
<feature type="binding site" evidence="1">
    <location>
        <position position="106"/>
    </location>
    <ligand>
        <name>[2Fe-2S] cluster</name>
        <dbReference type="ChEBI" id="CHEBI:190135"/>
    </ligand>
</feature>
<feature type="binding site" evidence="1">
    <location>
        <position position="138"/>
    </location>
    <ligand>
        <name>[2Fe-2S] cluster</name>
        <dbReference type="ChEBI" id="CHEBI:190135"/>
    </ligand>
</feature>
<feature type="binding site" evidence="1">
    <location>
        <position position="198"/>
    </location>
    <ligand>
        <name>[2Fe-2S] cluster</name>
        <dbReference type="ChEBI" id="CHEBI:190135"/>
    </ligand>
</feature>
<feature type="binding site" evidence="1">
    <location>
        <position position="268"/>
    </location>
    <ligand>
        <name>[2Fe-2S] cluster</name>
        <dbReference type="ChEBI" id="CHEBI:190135"/>
    </ligand>
</feature>
<feature type="binding site" evidence="1">
    <location>
        <position position="368"/>
    </location>
    <ligand>
        <name>(8S)-8-amino-7-oxononanoate</name>
        <dbReference type="ChEBI" id="CHEBI:149468"/>
    </ligand>
</feature>
<feature type="binding site">
    <location>
        <begin position="428"/>
        <end position="429"/>
    </location>
    <ligand>
        <name>pyridoxal 5'-phosphate</name>
        <dbReference type="ChEBI" id="CHEBI:597326"/>
    </ligand>
</feature>
<feature type="binding site" evidence="1">
    <location>
        <position position="461"/>
    </location>
    <ligand>
        <name>(8S)-8-amino-7-oxononanoate</name>
        <dbReference type="ChEBI" id="CHEBI:149468"/>
    </ligand>
</feature>
<feature type="binding site" evidence="1">
    <location>
        <position position="562"/>
    </location>
    <ligand>
        <name>pyridoxal 5'-phosphate</name>
        <dbReference type="ChEBI" id="CHEBI:597326"/>
    </ligand>
</feature>
<feature type="binding site" evidence="1">
    <location>
        <position position="591"/>
    </location>
    <ligand>
        <name>(8S)-8-amino-7-oxononanoate</name>
        <dbReference type="ChEBI" id="CHEBI:149468"/>
    </ligand>
</feature>
<feature type="binding site" evidence="1">
    <location>
        <position position="624"/>
    </location>
    <ligand>
        <name>(8S)-8-amino-7-oxononanoate</name>
        <dbReference type="ChEBI" id="CHEBI:149468"/>
    </ligand>
</feature>
<feature type="binding site" evidence="1">
    <location>
        <begin position="625"/>
        <end position="626"/>
    </location>
    <ligand>
        <name>pyridoxal 5'-phosphate</name>
        <dbReference type="ChEBI" id="CHEBI:597326"/>
    </ligand>
</feature>
<feature type="binding site" evidence="1">
    <location>
        <position position="708"/>
    </location>
    <ligand>
        <name>(8S)-8-amino-7-oxononanoate</name>
        <dbReference type="ChEBI" id="CHEBI:149468"/>
    </ligand>
</feature>
<feature type="site" description="Participates in the substrate recognition with KAPA and in a stacking interaction with the adenine ring of SAM" evidence="1">
    <location>
        <position position="333"/>
    </location>
</feature>
<feature type="modified residue" description="N6-(pyridoxal phosphate)lysine" evidence="1">
    <location>
        <position position="591"/>
    </location>
</feature>
<gene>
    <name type="primary">bioB</name>
    <name type="ordered locus">BT_1442</name>
</gene>
<accession>Q8A7T2</accession>
<evidence type="ECO:0000250" key="1"/>
<evidence type="ECO:0000255" key="2">
    <source>
        <dbReference type="PROSITE-ProRule" id="PRU01266"/>
    </source>
</evidence>
<evidence type="ECO:0000305" key="3"/>
<proteinExistence type="inferred from homology"/>
<dbReference type="EC" id="2.8.1.6"/>
<dbReference type="EC" id="2.6.1.62"/>
<dbReference type="EMBL" id="AE015928">
    <property type="protein sequence ID" value="AAO76549.1"/>
    <property type="status" value="ALT_INIT"/>
    <property type="molecule type" value="Genomic_DNA"/>
</dbReference>
<dbReference type="RefSeq" id="NP_810355.1">
    <property type="nucleotide sequence ID" value="NC_004663.1"/>
</dbReference>
<dbReference type="SMR" id="Q8A7T2"/>
<dbReference type="FunCoup" id="Q8A7T2">
    <property type="interactions" value="193"/>
</dbReference>
<dbReference type="STRING" id="226186.BT_1442"/>
<dbReference type="PaxDb" id="226186-BT_1442"/>
<dbReference type="EnsemblBacteria" id="AAO76549">
    <property type="protein sequence ID" value="AAO76549"/>
    <property type="gene ID" value="BT_1442"/>
</dbReference>
<dbReference type="KEGG" id="bth:BT_1442"/>
<dbReference type="PATRIC" id="fig|226186.12.peg.1474"/>
<dbReference type="eggNOG" id="COG0161">
    <property type="taxonomic scope" value="Bacteria"/>
</dbReference>
<dbReference type="eggNOG" id="COG0502">
    <property type="taxonomic scope" value="Bacteria"/>
</dbReference>
<dbReference type="HOGENOM" id="CLU_016922_9_0_10"/>
<dbReference type="InParanoid" id="Q8A7T2"/>
<dbReference type="OrthoDB" id="9807885at2"/>
<dbReference type="UniPathway" id="UPA00078">
    <property type="reaction ID" value="UER00160"/>
</dbReference>
<dbReference type="UniPathway" id="UPA00078">
    <property type="reaction ID" value="UER00162"/>
</dbReference>
<dbReference type="Proteomes" id="UP000001414">
    <property type="component" value="Chromosome"/>
</dbReference>
<dbReference type="GO" id="GO:0005737">
    <property type="term" value="C:cytoplasm"/>
    <property type="evidence" value="ECO:0007669"/>
    <property type="project" value="UniProtKB-UniRule"/>
</dbReference>
<dbReference type="GO" id="GO:0051537">
    <property type="term" value="F:2 iron, 2 sulfur cluster binding"/>
    <property type="evidence" value="ECO:0007669"/>
    <property type="project" value="UniProtKB-KW"/>
</dbReference>
<dbReference type="GO" id="GO:0051539">
    <property type="term" value="F:4 iron, 4 sulfur cluster binding"/>
    <property type="evidence" value="ECO:0007669"/>
    <property type="project" value="UniProtKB-KW"/>
</dbReference>
<dbReference type="GO" id="GO:0004015">
    <property type="term" value="F:adenosylmethionine-8-amino-7-oxononanoate transaminase activity"/>
    <property type="evidence" value="ECO:0000318"/>
    <property type="project" value="GO_Central"/>
</dbReference>
<dbReference type="GO" id="GO:0004076">
    <property type="term" value="F:biotin synthase activity"/>
    <property type="evidence" value="ECO:0007669"/>
    <property type="project" value="UniProtKB-UniRule"/>
</dbReference>
<dbReference type="GO" id="GO:0005506">
    <property type="term" value="F:iron ion binding"/>
    <property type="evidence" value="ECO:0007669"/>
    <property type="project" value="UniProtKB-UniRule"/>
</dbReference>
<dbReference type="GO" id="GO:0030170">
    <property type="term" value="F:pyridoxal phosphate binding"/>
    <property type="evidence" value="ECO:0007669"/>
    <property type="project" value="UniProtKB-UniRule"/>
</dbReference>
<dbReference type="GO" id="GO:0009102">
    <property type="term" value="P:biotin biosynthetic process"/>
    <property type="evidence" value="ECO:0000318"/>
    <property type="project" value="GO_Central"/>
</dbReference>
<dbReference type="CDD" id="cd00610">
    <property type="entry name" value="OAT_like"/>
    <property type="match status" value="1"/>
</dbReference>
<dbReference type="CDD" id="cd01335">
    <property type="entry name" value="Radical_SAM"/>
    <property type="match status" value="1"/>
</dbReference>
<dbReference type="FunFam" id="3.40.640.10:FF:000041">
    <property type="entry name" value="Adenosylmethionine-8-amino-7-oxononanoate aminotransferase"/>
    <property type="match status" value="1"/>
</dbReference>
<dbReference type="FunFam" id="3.20.20.70:FF:000026">
    <property type="entry name" value="Biotin synthase"/>
    <property type="match status" value="1"/>
</dbReference>
<dbReference type="Gene3D" id="3.20.20.70">
    <property type="entry name" value="Aldolase class I"/>
    <property type="match status" value="1"/>
</dbReference>
<dbReference type="Gene3D" id="3.90.1150.10">
    <property type="entry name" value="Aspartate Aminotransferase, domain 1"/>
    <property type="match status" value="1"/>
</dbReference>
<dbReference type="Gene3D" id="3.40.640.10">
    <property type="entry name" value="Type I PLP-dependent aspartate aminotransferase-like (Major domain)"/>
    <property type="match status" value="1"/>
</dbReference>
<dbReference type="HAMAP" id="MF_00834">
    <property type="entry name" value="BioA"/>
    <property type="match status" value="1"/>
</dbReference>
<dbReference type="HAMAP" id="MF_01694">
    <property type="entry name" value="BioB"/>
    <property type="match status" value="1"/>
</dbReference>
<dbReference type="InterPro" id="IPR013785">
    <property type="entry name" value="Aldolase_TIM"/>
</dbReference>
<dbReference type="InterPro" id="IPR005814">
    <property type="entry name" value="Aminotrans_3"/>
</dbReference>
<dbReference type="InterPro" id="IPR049704">
    <property type="entry name" value="Aminotrans_3_PPA_site"/>
</dbReference>
<dbReference type="InterPro" id="IPR010722">
    <property type="entry name" value="BATS_dom"/>
</dbReference>
<dbReference type="InterPro" id="IPR005815">
    <property type="entry name" value="BioA"/>
</dbReference>
<dbReference type="InterPro" id="IPR002684">
    <property type="entry name" value="Biotin_synth/BioAB"/>
</dbReference>
<dbReference type="InterPro" id="IPR006638">
    <property type="entry name" value="Elp3/MiaA/NifB-like_rSAM"/>
</dbReference>
<dbReference type="InterPro" id="IPR015424">
    <property type="entry name" value="PyrdxlP-dep_Trfase"/>
</dbReference>
<dbReference type="InterPro" id="IPR015421">
    <property type="entry name" value="PyrdxlP-dep_Trfase_major"/>
</dbReference>
<dbReference type="InterPro" id="IPR015422">
    <property type="entry name" value="PyrdxlP-dep_Trfase_small"/>
</dbReference>
<dbReference type="InterPro" id="IPR007197">
    <property type="entry name" value="rSAM"/>
</dbReference>
<dbReference type="NCBIfam" id="TIGR00508">
    <property type="entry name" value="bioA"/>
    <property type="match status" value="1"/>
</dbReference>
<dbReference type="NCBIfam" id="TIGR00433">
    <property type="entry name" value="bioB"/>
    <property type="match status" value="1"/>
</dbReference>
<dbReference type="NCBIfam" id="NF004624">
    <property type="entry name" value="PRK05964.1"/>
    <property type="match status" value="1"/>
</dbReference>
<dbReference type="NCBIfam" id="NF005940">
    <property type="entry name" value="PRK07986.1"/>
    <property type="match status" value="1"/>
</dbReference>
<dbReference type="PANTHER" id="PTHR42684">
    <property type="entry name" value="ADENOSYLMETHIONINE-8-AMINO-7-OXONONANOATE AMINOTRANSFERASE"/>
    <property type="match status" value="1"/>
</dbReference>
<dbReference type="PANTHER" id="PTHR42684:SF17">
    <property type="entry name" value="ADENOSYLMETHIONINE-8-AMINO-7-OXONONANOATE AMINOTRANSFERASE"/>
    <property type="match status" value="1"/>
</dbReference>
<dbReference type="Pfam" id="PF00202">
    <property type="entry name" value="Aminotran_3"/>
    <property type="match status" value="1"/>
</dbReference>
<dbReference type="Pfam" id="PF06968">
    <property type="entry name" value="BATS"/>
    <property type="match status" value="1"/>
</dbReference>
<dbReference type="Pfam" id="PF04055">
    <property type="entry name" value="Radical_SAM"/>
    <property type="match status" value="1"/>
</dbReference>
<dbReference type="SFLD" id="SFLDG01060">
    <property type="entry name" value="BATS_domain_containing"/>
    <property type="match status" value="1"/>
</dbReference>
<dbReference type="SFLD" id="SFLDG01278">
    <property type="entry name" value="biotin_synthase_like"/>
    <property type="match status" value="1"/>
</dbReference>
<dbReference type="SMART" id="SM00876">
    <property type="entry name" value="BATS"/>
    <property type="match status" value="1"/>
</dbReference>
<dbReference type="SMART" id="SM00729">
    <property type="entry name" value="Elp3"/>
    <property type="match status" value="1"/>
</dbReference>
<dbReference type="SUPFAM" id="SSF53383">
    <property type="entry name" value="PLP-dependent transferases"/>
    <property type="match status" value="1"/>
</dbReference>
<dbReference type="SUPFAM" id="SSF102114">
    <property type="entry name" value="Radical SAM enzymes"/>
    <property type="match status" value="1"/>
</dbReference>
<dbReference type="PROSITE" id="PS00600">
    <property type="entry name" value="AA_TRANSFER_CLASS_3"/>
    <property type="match status" value="1"/>
</dbReference>
<dbReference type="PROSITE" id="PS51918">
    <property type="entry name" value="RADICAL_SAM"/>
    <property type="match status" value="1"/>
</dbReference>
<comment type="function">
    <text evidence="1">Catalyzes two activities which are involved in the biotine biosynthesis: the conversion of dethiobiotin (DTB) to biotin by the insertion of a sulfur atom into dethiobiotin via a radical-based mechanism, and the transfer of the alpha-amino group from S-adenosyl-L-methionine (SAM) to 7-keto-8-aminopelargonic acid (KAPA) to form 7,8-diaminopelargonic acid (DAPA).</text>
</comment>
<comment type="catalytic activity">
    <reaction>
        <text>(4R,5S)-dethiobiotin + (sulfur carrier)-SH + 2 reduced [2Fe-2S]-[ferredoxin] + 2 S-adenosyl-L-methionine = (sulfur carrier)-H + biotin + 2 5'-deoxyadenosine + 2 L-methionine + 2 oxidized [2Fe-2S]-[ferredoxin]</text>
        <dbReference type="Rhea" id="RHEA:22060"/>
        <dbReference type="Rhea" id="RHEA-COMP:10000"/>
        <dbReference type="Rhea" id="RHEA-COMP:10001"/>
        <dbReference type="Rhea" id="RHEA-COMP:14737"/>
        <dbReference type="Rhea" id="RHEA-COMP:14739"/>
        <dbReference type="ChEBI" id="CHEBI:17319"/>
        <dbReference type="ChEBI" id="CHEBI:29917"/>
        <dbReference type="ChEBI" id="CHEBI:33737"/>
        <dbReference type="ChEBI" id="CHEBI:33738"/>
        <dbReference type="ChEBI" id="CHEBI:57586"/>
        <dbReference type="ChEBI" id="CHEBI:57844"/>
        <dbReference type="ChEBI" id="CHEBI:59789"/>
        <dbReference type="ChEBI" id="CHEBI:64428"/>
        <dbReference type="ChEBI" id="CHEBI:149473"/>
        <dbReference type="EC" id="2.8.1.6"/>
    </reaction>
</comment>
<comment type="catalytic activity">
    <reaction>
        <text>(8S)-8-amino-7-oxononanoate + S-adenosyl-L-methionine = S-adenosyl-4-methylsulfanyl-2-oxobutanoate + (7R,8S)-7,8-diammoniononanoate</text>
        <dbReference type="Rhea" id="RHEA:16861"/>
        <dbReference type="ChEBI" id="CHEBI:16490"/>
        <dbReference type="ChEBI" id="CHEBI:59789"/>
        <dbReference type="ChEBI" id="CHEBI:149468"/>
        <dbReference type="ChEBI" id="CHEBI:149469"/>
        <dbReference type="EC" id="2.6.1.62"/>
    </reaction>
</comment>
<comment type="cofactor">
    <cofactor evidence="1">
        <name>[4Fe-4S] cluster</name>
        <dbReference type="ChEBI" id="CHEBI:49883"/>
    </cofactor>
    <text evidence="1">Binds 1 [4Fe-4S] cluster. The cluster is coordinated with 3 cysteines and an exchangeable S-adenosyl-L-methionine.</text>
</comment>
<comment type="cofactor">
    <cofactor evidence="1">
        <name>[2Fe-2S] cluster</name>
        <dbReference type="ChEBI" id="CHEBI:190135"/>
    </cofactor>
    <text evidence="1">Binds 1 [2Fe-2S] cluster. The cluster is coordinated with 3 cysteines and 1 arginine.</text>
</comment>
<comment type="cofactor">
    <cofactor evidence="1">
        <name>pyridoxal 5'-phosphate</name>
        <dbReference type="ChEBI" id="CHEBI:597326"/>
    </cofactor>
</comment>
<comment type="pathway">
    <text>Cofactor biosynthesis; biotin biosynthesis; biotin from 7,8-diaminononanoate: step 2/2.</text>
</comment>
<comment type="pathway">
    <text>Cofactor biosynthesis; biotin biosynthesis; 7,8-diaminononanoate from 8-amino-7-oxononanoate (SAM route): step 1/1.</text>
</comment>
<comment type="subunit">
    <text evidence="1">Homodimer.</text>
</comment>
<comment type="similarity">
    <text evidence="3">In the N-terminal section; belongs to the radical SAM superfamily. Biotin synthase family.</text>
</comment>
<comment type="similarity">
    <text evidence="3">In the C-terminal section; belongs to the class-III pyridoxal-phosphate-dependent aminotransferase family. BioA subfamily.</text>
</comment>
<comment type="sequence caution" evidence="3">
    <conflict type="erroneous initiation">
        <sequence resource="EMBL-CDS" id="AAO76549"/>
    </conflict>
    <text>Extended N-terminus.</text>
</comment>